<sequence length="657" mass="73681">MTQLAIGKPTPLGAHYDGQGVNFTLFSAHAERVELCVFDANGQEHRYDLPGHSGDIWHGYLPDARPGLRYGYRVHGPWQPAEGHRFNPAKLLIDPCARQIDGEFKDNPLLHAGHNEPDYRDNAAIAPKCVVVVDHYDWEDDAPPRTPWGSTIIYEAHVKGLTYLHPEIPVEIRGTYKALGHPVMINYLKQLGITALELLPVAQFASEPRLQRMGLSNYWGYNPVAMFALHPAYACSPETALDEFRDAIKALHKAGIEVILDIVLNHSAELDLDGPLFSLRGIDNRSYYWIREDGDYHNWTGCGNTLNLSHPAVVDYASACLRYWVETCHVDGFRFDLAAVMGRTPEFRQDAPLFTAIQNCPVLSQVKLIAEPWDIAPGGYQVGNFPPLFAEWNDHFRDAARRFWLHYDLPLGVFAGRFAASSDVFKRNGRLPSAAINLVTAHDGFTLRDCVCFNHKHNEANGEENRDGTNNNYSNNHGKEGLGGTLDLVERRRDSIHALLTTLLLSQGTPMLLAGDEHGHSQHGNNNAYCQDNQLTWLDWSQASSGLTAFTAALIHLRKRIPALMENRWWEEGDGNVRWLNRYAQPLSTDEWQNGPKQLQILLSDRFLIAINATLEVTEIVLPAGEWHAIPPFAGEDNPVITAVWQGPAHGLCVFQR</sequence>
<reference key="1">
    <citation type="journal article" date="2009" name="J. Bacteriol.">
        <title>Complete genome sequence and comparative genome analysis of enteropathogenic Escherichia coli O127:H6 strain E2348/69.</title>
        <authorList>
            <person name="Iguchi A."/>
            <person name="Thomson N.R."/>
            <person name="Ogura Y."/>
            <person name="Saunders D."/>
            <person name="Ooka T."/>
            <person name="Henderson I.R."/>
            <person name="Harris D."/>
            <person name="Asadulghani M."/>
            <person name="Kurokawa K."/>
            <person name="Dean P."/>
            <person name="Kenny B."/>
            <person name="Quail M.A."/>
            <person name="Thurston S."/>
            <person name="Dougan G."/>
            <person name="Hayashi T."/>
            <person name="Parkhill J."/>
            <person name="Frankel G."/>
        </authorList>
    </citation>
    <scope>NUCLEOTIDE SEQUENCE [LARGE SCALE GENOMIC DNA]</scope>
    <source>
        <strain>E2348/69 / EPEC</strain>
    </source>
</reference>
<organism>
    <name type="scientific">Escherichia coli O127:H6 (strain E2348/69 / EPEC)</name>
    <dbReference type="NCBI Taxonomy" id="574521"/>
    <lineage>
        <taxon>Bacteria</taxon>
        <taxon>Pseudomonadati</taxon>
        <taxon>Pseudomonadota</taxon>
        <taxon>Gammaproteobacteria</taxon>
        <taxon>Enterobacterales</taxon>
        <taxon>Enterobacteriaceae</taxon>
        <taxon>Escherichia</taxon>
    </lineage>
</organism>
<proteinExistence type="inferred from homology"/>
<gene>
    <name evidence="1" type="primary">glgX</name>
    <name type="ordered locus">E2348C_3677</name>
</gene>
<keyword id="KW-0119">Carbohydrate metabolism</keyword>
<keyword id="KW-0321">Glycogen metabolism</keyword>
<keyword id="KW-0326">Glycosidase</keyword>
<keyword id="KW-0378">Hydrolase</keyword>
<keyword id="KW-1185">Reference proteome</keyword>
<dbReference type="EC" id="3.2.1.196" evidence="1"/>
<dbReference type="EMBL" id="FM180568">
    <property type="protein sequence ID" value="CAS11225.1"/>
    <property type="molecule type" value="Genomic_DNA"/>
</dbReference>
<dbReference type="RefSeq" id="WP_000192570.1">
    <property type="nucleotide sequence ID" value="NC_011601.1"/>
</dbReference>
<dbReference type="SMR" id="B7UKY8"/>
<dbReference type="CAZy" id="CBM48">
    <property type="family name" value="Carbohydrate-Binding Module Family 48"/>
</dbReference>
<dbReference type="CAZy" id="GH13">
    <property type="family name" value="Glycoside Hydrolase Family 13"/>
</dbReference>
<dbReference type="KEGG" id="ecg:E2348C_3677"/>
<dbReference type="HOGENOM" id="CLU_011725_1_1_6"/>
<dbReference type="UniPathway" id="UPA00165"/>
<dbReference type="Proteomes" id="UP000008205">
    <property type="component" value="Chromosome"/>
</dbReference>
<dbReference type="GO" id="GO:0004133">
    <property type="term" value="F:glycogen debranching enzyme activity"/>
    <property type="evidence" value="ECO:0007669"/>
    <property type="project" value="UniProtKB-UniRule"/>
</dbReference>
<dbReference type="GO" id="GO:0004553">
    <property type="term" value="F:hydrolase activity, hydrolyzing O-glycosyl compounds"/>
    <property type="evidence" value="ECO:0007669"/>
    <property type="project" value="InterPro"/>
</dbReference>
<dbReference type="GO" id="GO:0005980">
    <property type="term" value="P:glycogen catabolic process"/>
    <property type="evidence" value="ECO:0007669"/>
    <property type="project" value="UniProtKB-UniRule"/>
</dbReference>
<dbReference type="CDD" id="cd11326">
    <property type="entry name" value="AmyAc_Glg_debranch"/>
    <property type="match status" value="1"/>
</dbReference>
<dbReference type="CDD" id="cd02856">
    <property type="entry name" value="E_set_GDE_Isoamylase_N"/>
    <property type="match status" value="1"/>
</dbReference>
<dbReference type="FunFam" id="2.60.40.10:FF:000468">
    <property type="entry name" value="Glycogen debranching enzyme"/>
    <property type="match status" value="1"/>
</dbReference>
<dbReference type="FunFam" id="3.20.20.80:FF:000031">
    <property type="entry name" value="Glycogen debranching enzyme"/>
    <property type="match status" value="1"/>
</dbReference>
<dbReference type="Gene3D" id="3.20.20.80">
    <property type="entry name" value="Glycosidases"/>
    <property type="match status" value="1"/>
</dbReference>
<dbReference type="Gene3D" id="2.60.40.1180">
    <property type="entry name" value="Golgi alpha-mannosidase II"/>
    <property type="match status" value="1"/>
</dbReference>
<dbReference type="Gene3D" id="2.60.40.10">
    <property type="entry name" value="Immunoglobulins"/>
    <property type="match status" value="1"/>
</dbReference>
<dbReference type="HAMAP" id="MF_01248">
    <property type="entry name" value="GlgX"/>
    <property type="match status" value="1"/>
</dbReference>
<dbReference type="InterPro" id="IPR040784">
    <property type="entry name" value="GlgX_C"/>
</dbReference>
<dbReference type="InterPro" id="IPR044505">
    <property type="entry name" value="GlgX_Isoamylase_N_E_set"/>
</dbReference>
<dbReference type="InterPro" id="IPR006047">
    <property type="entry name" value="Glyco_hydro_13_cat_dom"/>
</dbReference>
<dbReference type="InterPro" id="IPR004193">
    <property type="entry name" value="Glyco_hydro_13_N"/>
</dbReference>
<dbReference type="InterPro" id="IPR013780">
    <property type="entry name" value="Glyco_hydro_b"/>
</dbReference>
<dbReference type="InterPro" id="IPR022844">
    <property type="entry name" value="Glycogen_debranch_bac"/>
</dbReference>
<dbReference type="InterPro" id="IPR011837">
    <property type="entry name" value="Glycogen_debranch_GlgX"/>
</dbReference>
<dbReference type="InterPro" id="IPR017853">
    <property type="entry name" value="Glycoside_hydrolase_SF"/>
</dbReference>
<dbReference type="InterPro" id="IPR013783">
    <property type="entry name" value="Ig-like_fold"/>
</dbReference>
<dbReference type="InterPro" id="IPR014756">
    <property type="entry name" value="Ig_E-set"/>
</dbReference>
<dbReference type="NCBIfam" id="TIGR02100">
    <property type="entry name" value="glgX_debranch"/>
    <property type="match status" value="1"/>
</dbReference>
<dbReference type="NCBIfam" id="NF002983">
    <property type="entry name" value="PRK03705.1"/>
    <property type="match status" value="1"/>
</dbReference>
<dbReference type="PANTHER" id="PTHR43002">
    <property type="entry name" value="GLYCOGEN DEBRANCHING ENZYME"/>
    <property type="match status" value="1"/>
</dbReference>
<dbReference type="Pfam" id="PF00128">
    <property type="entry name" value="Alpha-amylase"/>
    <property type="match status" value="1"/>
</dbReference>
<dbReference type="Pfam" id="PF02922">
    <property type="entry name" value="CBM_48"/>
    <property type="match status" value="1"/>
</dbReference>
<dbReference type="Pfam" id="PF18390">
    <property type="entry name" value="GlgX_C"/>
    <property type="match status" value="1"/>
</dbReference>
<dbReference type="SMART" id="SM00642">
    <property type="entry name" value="Aamy"/>
    <property type="match status" value="1"/>
</dbReference>
<dbReference type="SUPFAM" id="SSF51445">
    <property type="entry name" value="(Trans)glycosidases"/>
    <property type="match status" value="1"/>
</dbReference>
<dbReference type="SUPFAM" id="SSF81296">
    <property type="entry name" value="E set domains"/>
    <property type="match status" value="1"/>
</dbReference>
<evidence type="ECO:0000255" key="1">
    <source>
        <dbReference type="HAMAP-Rule" id="MF_01248"/>
    </source>
</evidence>
<evidence type="ECO:0000256" key="2">
    <source>
        <dbReference type="SAM" id="MobiDB-lite"/>
    </source>
</evidence>
<feature type="chain" id="PRO_1000165054" description="Glycogen debranching enzyme">
    <location>
        <begin position="1"/>
        <end position="657"/>
    </location>
</feature>
<feature type="region of interest" description="Disordered" evidence="2">
    <location>
        <begin position="460"/>
        <end position="479"/>
    </location>
</feature>
<feature type="active site" description="Nucleophile" evidence="1">
    <location>
        <position position="336"/>
    </location>
</feature>
<feature type="active site" description="Proton donor" evidence="1">
    <location>
        <position position="371"/>
    </location>
</feature>
<feature type="site" description="Transition state stabilizer" evidence="1">
    <location>
        <position position="443"/>
    </location>
</feature>
<accession>B7UKY8</accession>
<name>GLGX_ECO27</name>
<comment type="function">
    <text evidence="1">Removes maltotriose and maltotetraose chains that are attached by 1,6-alpha-linkage to the limit dextrin main chain, generating a debranched limit dextrin.</text>
</comment>
<comment type="catalytic activity">
    <reaction evidence="1">
        <text>Hydrolysis of (1-&gt;6)-alpha-D-glucosidic linkages to branches with degrees of polymerization of three or four glucose residues in limit dextrin.</text>
        <dbReference type="EC" id="3.2.1.196"/>
    </reaction>
</comment>
<comment type="pathway">
    <text evidence="1">Glycan degradation; glycogen degradation.</text>
</comment>
<comment type="similarity">
    <text evidence="1">Belongs to the glycosyl hydrolase 13 family.</text>
</comment>
<protein>
    <recommendedName>
        <fullName evidence="1">Glycogen debranching enzyme</fullName>
        <ecNumber evidence="1">3.2.1.196</ecNumber>
    </recommendedName>
    <alternativeName>
        <fullName evidence="1">Limit dextrin alpha-1,6-maltotetraose-hydrolase</fullName>
    </alternativeName>
</protein>